<evidence type="ECO:0000255" key="1">
    <source>
        <dbReference type="HAMAP-Rule" id="MF_01151"/>
    </source>
</evidence>
<evidence type="ECO:0000256" key="2">
    <source>
        <dbReference type="SAM" id="MobiDB-lite"/>
    </source>
</evidence>
<dbReference type="EMBL" id="BA000019">
    <property type="protein sequence ID" value="BAB74144.1"/>
    <property type="molecule type" value="Genomic_DNA"/>
</dbReference>
<dbReference type="PIR" id="AF2111">
    <property type="entry name" value="AF2111"/>
</dbReference>
<dbReference type="RefSeq" id="WP_010996601.1">
    <property type="nucleotide sequence ID" value="NZ_RSCN01000002.1"/>
</dbReference>
<dbReference type="SMR" id="Q8YUA7"/>
<dbReference type="STRING" id="103690.gene:10494475"/>
<dbReference type="KEGG" id="ana:alr2445"/>
<dbReference type="eggNOG" id="COG0576">
    <property type="taxonomic scope" value="Bacteria"/>
</dbReference>
<dbReference type="OrthoDB" id="9812586at2"/>
<dbReference type="Proteomes" id="UP000002483">
    <property type="component" value="Chromosome"/>
</dbReference>
<dbReference type="GO" id="GO:0005737">
    <property type="term" value="C:cytoplasm"/>
    <property type="evidence" value="ECO:0007669"/>
    <property type="project" value="UniProtKB-SubCell"/>
</dbReference>
<dbReference type="GO" id="GO:0000774">
    <property type="term" value="F:adenyl-nucleotide exchange factor activity"/>
    <property type="evidence" value="ECO:0007669"/>
    <property type="project" value="InterPro"/>
</dbReference>
<dbReference type="GO" id="GO:0042803">
    <property type="term" value="F:protein homodimerization activity"/>
    <property type="evidence" value="ECO:0007669"/>
    <property type="project" value="InterPro"/>
</dbReference>
<dbReference type="GO" id="GO:0051087">
    <property type="term" value="F:protein-folding chaperone binding"/>
    <property type="evidence" value="ECO:0007669"/>
    <property type="project" value="InterPro"/>
</dbReference>
<dbReference type="GO" id="GO:0051082">
    <property type="term" value="F:unfolded protein binding"/>
    <property type="evidence" value="ECO:0007669"/>
    <property type="project" value="TreeGrafter"/>
</dbReference>
<dbReference type="GO" id="GO:0006457">
    <property type="term" value="P:protein folding"/>
    <property type="evidence" value="ECO:0007669"/>
    <property type="project" value="InterPro"/>
</dbReference>
<dbReference type="CDD" id="cd00446">
    <property type="entry name" value="GrpE"/>
    <property type="match status" value="1"/>
</dbReference>
<dbReference type="FunFam" id="2.30.22.10:FF:000001">
    <property type="entry name" value="Protein GrpE"/>
    <property type="match status" value="1"/>
</dbReference>
<dbReference type="Gene3D" id="3.90.20.20">
    <property type="match status" value="1"/>
</dbReference>
<dbReference type="Gene3D" id="2.30.22.10">
    <property type="entry name" value="Head domain of nucleotide exchange factor GrpE"/>
    <property type="match status" value="1"/>
</dbReference>
<dbReference type="HAMAP" id="MF_01151">
    <property type="entry name" value="GrpE"/>
    <property type="match status" value="1"/>
</dbReference>
<dbReference type="InterPro" id="IPR000740">
    <property type="entry name" value="GrpE"/>
</dbReference>
<dbReference type="InterPro" id="IPR013805">
    <property type="entry name" value="GrpE_coiled_coil"/>
</dbReference>
<dbReference type="InterPro" id="IPR009012">
    <property type="entry name" value="GrpE_head"/>
</dbReference>
<dbReference type="NCBIfam" id="NF010738">
    <property type="entry name" value="PRK14140.1"/>
    <property type="match status" value="1"/>
</dbReference>
<dbReference type="NCBIfam" id="NF010741">
    <property type="entry name" value="PRK14143.1"/>
    <property type="match status" value="1"/>
</dbReference>
<dbReference type="PANTHER" id="PTHR21237">
    <property type="entry name" value="GRPE PROTEIN"/>
    <property type="match status" value="1"/>
</dbReference>
<dbReference type="PANTHER" id="PTHR21237:SF23">
    <property type="entry name" value="GRPE PROTEIN HOMOLOG, MITOCHONDRIAL"/>
    <property type="match status" value="1"/>
</dbReference>
<dbReference type="Pfam" id="PF01025">
    <property type="entry name" value="GrpE"/>
    <property type="match status" value="1"/>
</dbReference>
<dbReference type="PRINTS" id="PR00773">
    <property type="entry name" value="GRPEPROTEIN"/>
</dbReference>
<dbReference type="SUPFAM" id="SSF58014">
    <property type="entry name" value="Coiled-coil domain of nucleotide exchange factor GrpE"/>
    <property type="match status" value="1"/>
</dbReference>
<dbReference type="SUPFAM" id="SSF51064">
    <property type="entry name" value="Head domain of nucleotide exchange factor GrpE"/>
    <property type="match status" value="1"/>
</dbReference>
<dbReference type="PROSITE" id="PS01071">
    <property type="entry name" value="GRPE"/>
    <property type="match status" value="1"/>
</dbReference>
<proteinExistence type="inferred from homology"/>
<reference key="1">
    <citation type="journal article" date="2001" name="DNA Res.">
        <title>Complete genomic sequence of the filamentous nitrogen-fixing cyanobacterium Anabaena sp. strain PCC 7120.</title>
        <authorList>
            <person name="Kaneko T."/>
            <person name="Nakamura Y."/>
            <person name="Wolk C.P."/>
            <person name="Kuritz T."/>
            <person name="Sasamoto S."/>
            <person name="Watanabe A."/>
            <person name="Iriguchi M."/>
            <person name="Ishikawa A."/>
            <person name="Kawashima K."/>
            <person name="Kimura T."/>
            <person name="Kishida Y."/>
            <person name="Kohara M."/>
            <person name="Matsumoto M."/>
            <person name="Matsuno A."/>
            <person name="Muraki A."/>
            <person name="Nakazaki N."/>
            <person name="Shimpo S."/>
            <person name="Sugimoto M."/>
            <person name="Takazawa M."/>
            <person name="Yamada M."/>
            <person name="Yasuda M."/>
            <person name="Tabata S."/>
        </authorList>
    </citation>
    <scope>NUCLEOTIDE SEQUENCE [LARGE SCALE GENOMIC DNA]</scope>
    <source>
        <strain>PCC 7120 / SAG 25.82 / UTEX 2576</strain>
    </source>
</reference>
<organism>
    <name type="scientific">Nostoc sp. (strain PCC 7120 / SAG 25.82 / UTEX 2576)</name>
    <dbReference type="NCBI Taxonomy" id="103690"/>
    <lineage>
        <taxon>Bacteria</taxon>
        <taxon>Bacillati</taxon>
        <taxon>Cyanobacteriota</taxon>
        <taxon>Cyanophyceae</taxon>
        <taxon>Nostocales</taxon>
        <taxon>Nostocaceae</taxon>
        <taxon>Nostoc</taxon>
    </lineage>
</organism>
<feature type="chain" id="PRO_0000113733" description="Protein GrpE">
    <location>
        <begin position="1"/>
        <end position="248"/>
    </location>
</feature>
<feature type="region of interest" description="Disordered" evidence="2">
    <location>
        <begin position="229"/>
        <end position="248"/>
    </location>
</feature>
<feature type="compositionally biased region" description="Polar residues" evidence="2">
    <location>
        <begin position="238"/>
        <end position="248"/>
    </location>
</feature>
<comment type="function">
    <text evidence="1">Participates actively in the response to hyperosmotic and heat shock by preventing the aggregation of stress-denatured proteins, in association with DnaK and GrpE. It is the nucleotide exchange factor for DnaK and may function as a thermosensor. Unfolded proteins bind initially to DnaJ; upon interaction with the DnaJ-bound protein, DnaK hydrolyzes its bound ATP, resulting in the formation of a stable complex. GrpE releases ADP from DnaK; ATP binding to DnaK triggers the release of the substrate protein, thus completing the reaction cycle. Several rounds of ATP-dependent interactions between DnaJ, DnaK and GrpE are required for fully efficient folding.</text>
</comment>
<comment type="subunit">
    <text evidence="1">Homodimer.</text>
</comment>
<comment type="subcellular location">
    <subcellularLocation>
        <location evidence="1">Cytoplasm</location>
    </subcellularLocation>
</comment>
<comment type="similarity">
    <text evidence="1">Belongs to the GrpE family.</text>
</comment>
<accession>Q8YUA7</accession>
<gene>
    <name evidence="1" type="primary">grpE</name>
    <name type="ordered locus">alr2445</name>
</gene>
<name>GRPE_NOSS1</name>
<sequence length="248" mass="27934">MIDENKQVNHTSQQLGESTEVKQAIMSESPAQINNNESANEVTEPVAIPTNVVGDTTATEDNGFTATQIQEANTAALAELTQQISSLKTQLDERSTQYMRIAADFENYRKRTQKEKEELDLQVKRNTILELLPIVDNFERARSHLKPQTESEMTIHKSYQGVYKQLVDSLKRLGVSPMRPEGQEFDPNLHEAVMREPTDEHPEGTVLEELVRGYYLGDRVLRHSMVKVAAPKEDTLPAQENQSSPADS</sequence>
<keyword id="KW-0143">Chaperone</keyword>
<keyword id="KW-0963">Cytoplasm</keyword>
<keyword id="KW-1185">Reference proteome</keyword>
<keyword id="KW-0346">Stress response</keyword>
<protein>
    <recommendedName>
        <fullName evidence="1">Protein GrpE</fullName>
    </recommendedName>
    <alternativeName>
        <fullName evidence="1">HSP-70 cofactor</fullName>
    </alternativeName>
</protein>